<sequence>MTAIRDNLCELKRLEIPRPKCQGMQFVATRGRQGFYRTIRENGAMYGIQLKPQGPKRPQLSSDLFNRPMTVPEENSEDVEEAQTSQPETRKVEMNNNNNYKISYTSRPPLPPQQPKQTYTLQRTTPQAQPTPQQPRMFSRSSGGITGAVNNRPQMVAQQREIAQK</sequence>
<name>YWO3_CAEEL</name>
<reference key="1">
    <citation type="journal article" date="1998" name="Science">
        <title>Genome sequence of the nematode C. elegans: a platform for investigating biology.</title>
        <authorList>
            <consortium name="The C. elegans sequencing consortium"/>
        </authorList>
    </citation>
    <scope>NUCLEOTIDE SEQUENCE [LARGE SCALE GENOMIC DNA]</scope>
    <source>
        <strain>Bristol N2</strain>
    </source>
</reference>
<feature type="chain" id="PRO_0000065042" description="Uncharacterized protein AH9.3">
    <location>
        <begin position="1"/>
        <end position="165"/>
    </location>
</feature>
<feature type="region of interest" description="Disordered" evidence="1">
    <location>
        <begin position="49"/>
        <end position="165"/>
    </location>
</feature>
<feature type="compositionally biased region" description="Polar residues" evidence="1">
    <location>
        <begin position="94"/>
        <end position="106"/>
    </location>
</feature>
<feature type="compositionally biased region" description="Low complexity" evidence="1">
    <location>
        <begin position="120"/>
        <end position="135"/>
    </location>
</feature>
<feature type="compositionally biased region" description="Polar residues" evidence="1">
    <location>
        <begin position="139"/>
        <end position="157"/>
    </location>
</feature>
<protein>
    <recommendedName>
        <fullName>Uncharacterized protein AH9.3</fullName>
    </recommendedName>
</protein>
<accession>Q10906</accession>
<accession>Q2L6W6</accession>
<proteinExistence type="predicted"/>
<evidence type="ECO:0000256" key="1">
    <source>
        <dbReference type="SAM" id="MobiDB-lite"/>
    </source>
</evidence>
<keyword id="KW-1185">Reference proteome</keyword>
<dbReference type="EMBL" id="FO080097">
    <property type="protein sequence ID" value="CCD61185.1"/>
    <property type="molecule type" value="Genomic_DNA"/>
</dbReference>
<dbReference type="PIR" id="T30087">
    <property type="entry name" value="T30087"/>
</dbReference>
<dbReference type="RefSeq" id="NP_508416.2">
    <property type="nucleotide sequence ID" value="NM_076015.4"/>
</dbReference>
<dbReference type="BioGRID" id="45482">
    <property type="interactions" value="1"/>
</dbReference>
<dbReference type="BioGRID" id="46780">
    <property type="interactions" value="1"/>
</dbReference>
<dbReference type="FunCoup" id="Q10906">
    <property type="interactions" value="194"/>
</dbReference>
<dbReference type="PaxDb" id="6239-B0302.5"/>
<dbReference type="PeptideAtlas" id="Q10906"/>
<dbReference type="EnsemblMetazoa" id="AH9.3.1">
    <property type="protein sequence ID" value="AH9.3.1"/>
    <property type="gene ID" value="WBGene00014999"/>
</dbReference>
<dbReference type="EnsemblMetazoa" id="AH9.3.2">
    <property type="protein sequence ID" value="AH9.3.2"/>
    <property type="gene ID" value="WBGene00014999"/>
</dbReference>
<dbReference type="GeneID" id="180537"/>
<dbReference type="KEGG" id="cel:CELE_AH9.3"/>
<dbReference type="KEGG" id="cel:CELE_B0302.5"/>
<dbReference type="UCSC" id="AH9.3">
    <property type="organism name" value="c. elegans"/>
</dbReference>
<dbReference type="AGR" id="WB:WBGene00014999"/>
<dbReference type="CTD" id="180537"/>
<dbReference type="CTD" id="181914"/>
<dbReference type="WormBase" id="AH9.3">
    <property type="protein sequence ID" value="CE39538"/>
    <property type="gene ID" value="WBGene00014999"/>
</dbReference>
<dbReference type="eggNOG" id="ENOG502SFW0">
    <property type="taxonomic scope" value="Eukaryota"/>
</dbReference>
<dbReference type="HOGENOM" id="CLU_1645268_0_0_1"/>
<dbReference type="InParanoid" id="Q10906"/>
<dbReference type="OMA" id="IPRPKCQ"/>
<dbReference type="OrthoDB" id="5831187at2759"/>
<dbReference type="PRO" id="PR:Q10906"/>
<dbReference type="Proteomes" id="UP000001940">
    <property type="component" value="Chromosome X"/>
</dbReference>
<dbReference type="Bgee" id="WBGene00014999">
    <property type="expression patterns" value="Expressed in embryo and 4 other cell types or tissues"/>
</dbReference>
<gene>
    <name type="ORF">AH9.3</name>
</gene>
<organism>
    <name type="scientific">Caenorhabditis elegans</name>
    <dbReference type="NCBI Taxonomy" id="6239"/>
    <lineage>
        <taxon>Eukaryota</taxon>
        <taxon>Metazoa</taxon>
        <taxon>Ecdysozoa</taxon>
        <taxon>Nematoda</taxon>
        <taxon>Chromadorea</taxon>
        <taxon>Rhabditida</taxon>
        <taxon>Rhabditina</taxon>
        <taxon>Rhabditomorpha</taxon>
        <taxon>Rhabditoidea</taxon>
        <taxon>Rhabditidae</taxon>
        <taxon>Peloderinae</taxon>
        <taxon>Caenorhabditis</taxon>
    </lineage>
</organism>